<comment type="function">
    <text evidence="1">CRISPR (clustered regularly interspaced short palindromic repeat), is an adaptive immune system that provides protection against mobile genetic elements (viruses, transposable elements and conjugative plasmids). CRISPR clusters contain spacers, sequences complementary to antecedent mobile elements, and target invading nucleic acids. CRISPR clusters are transcribed and processed into CRISPR RNA (crRNA). Acts as a dsDNA endonuclease. Involved in the integration of spacer DNA into the CRISPR cassette.</text>
</comment>
<comment type="cofactor">
    <cofactor evidence="1">
        <name>Mg(2+)</name>
        <dbReference type="ChEBI" id="CHEBI:18420"/>
    </cofactor>
    <cofactor evidence="1">
        <name>Mn(2+)</name>
        <dbReference type="ChEBI" id="CHEBI:29035"/>
    </cofactor>
</comment>
<comment type="subunit">
    <text evidence="1">Homodimer, forms a heterotetramer with a Cas2 homodimer.</text>
</comment>
<comment type="similarity">
    <text evidence="1">Belongs to the CRISPR-associated endonuclease Cas1 family.</text>
</comment>
<accession>Q8KB21</accession>
<name>CAS1B_CHLTE</name>
<proteinExistence type="inferred from homology"/>
<protein>
    <recommendedName>
        <fullName evidence="1">CRISPR-associated endonuclease Cas1 2</fullName>
        <ecNumber evidence="1">3.1.-.-</ecNumber>
    </recommendedName>
</protein>
<gene>
    <name evidence="1" type="primary">cas1-2</name>
    <name type="ordered locus">CT1977</name>
</gene>
<organism>
    <name type="scientific">Chlorobaculum tepidum (strain ATCC 49652 / DSM 12025 / NBRC 103806 / TLS)</name>
    <name type="common">Chlorobium tepidum</name>
    <dbReference type="NCBI Taxonomy" id="194439"/>
    <lineage>
        <taxon>Bacteria</taxon>
        <taxon>Pseudomonadati</taxon>
        <taxon>Chlorobiota</taxon>
        <taxon>Chlorobiia</taxon>
        <taxon>Chlorobiales</taxon>
        <taxon>Chlorobiaceae</taxon>
        <taxon>Chlorobaculum</taxon>
    </lineage>
</organism>
<sequence>MKSNTLGDEGNPARLLIKVTRETLPQVKEKYPFLYLEKGRIEIDDSSIKWIDCDCNVVRLPVAMLNCILLGPGTTVTHEAVKVMAAANCGICWVGDDSLMFYASGQTPTSNTRNMTHQMKLAANPAKALEVARRLFAYRFPDANLENKTLPQMMGMEGLRVRKLYEEMAVKYKVGWKGRRFEPGKFEMSDTTNKILTASNAALYSIILSAVHSMGYSPHIGFIHSGSPLPFIYDLADLYKQQVSIDLAFSLTADMAGYYDRHKIASEFRKRVIEIDLLGKIGPDIETILGKKQCSS</sequence>
<dbReference type="EC" id="3.1.-.-" evidence="1"/>
<dbReference type="EMBL" id="AE006470">
    <property type="protein sequence ID" value="AAM73195.1"/>
    <property type="molecule type" value="Genomic_DNA"/>
</dbReference>
<dbReference type="RefSeq" id="NP_662853.1">
    <property type="nucleotide sequence ID" value="NC_002932.3"/>
</dbReference>
<dbReference type="RefSeq" id="WP_010933633.1">
    <property type="nucleotide sequence ID" value="NC_002932.3"/>
</dbReference>
<dbReference type="SMR" id="Q8KB21"/>
<dbReference type="STRING" id="194439.CT1977"/>
<dbReference type="EnsemblBacteria" id="AAM73195">
    <property type="protein sequence ID" value="AAM73195"/>
    <property type="gene ID" value="CT1977"/>
</dbReference>
<dbReference type="KEGG" id="cte:CT1977"/>
<dbReference type="PATRIC" id="fig|194439.7.peg.1791"/>
<dbReference type="eggNOG" id="COG1518">
    <property type="taxonomic scope" value="Bacteria"/>
</dbReference>
<dbReference type="HOGENOM" id="CLU_077904_0_0_10"/>
<dbReference type="OrthoDB" id="9777847at2"/>
<dbReference type="Proteomes" id="UP000001007">
    <property type="component" value="Chromosome"/>
</dbReference>
<dbReference type="GO" id="GO:0003677">
    <property type="term" value="F:DNA binding"/>
    <property type="evidence" value="ECO:0007669"/>
    <property type="project" value="UniProtKB-KW"/>
</dbReference>
<dbReference type="GO" id="GO:0004520">
    <property type="term" value="F:DNA endonuclease activity"/>
    <property type="evidence" value="ECO:0007669"/>
    <property type="project" value="InterPro"/>
</dbReference>
<dbReference type="GO" id="GO:0046872">
    <property type="term" value="F:metal ion binding"/>
    <property type="evidence" value="ECO:0007669"/>
    <property type="project" value="UniProtKB-UniRule"/>
</dbReference>
<dbReference type="GO" id="GO:0051607">
    <property type="term" value="P:defense response to virus"/>
    <property type="evidence" value="ECO:0007669"/>
    <property type="project" value="UniProtKB-UniRule"/>
</dbReference>
<dbReference type="GO" id="GO:0043571">
    <property type="term" value="P:maintenance of CRISPR repeat elements"/>
    <property type="evidence" value="ECO:0007669"/>
    <property type="project" value="UniProtKB-UniRule"/>
</dbReference>
<dbReference type="CDD" id="cd09719">
    <property type="entry name" value="Cas1_I-E"/>
    <property type="match status" value="1"/>
</dbReference>
<dbReference type="Gene3D" id="1.20.120.920">
    <property type="entry name" value="CRISPR-associated endonuclease Cas1, C-terminal domain"/>
    <property type="match status" value="1"/>
</dbReference>
<dbReference type="Gene3D" id="3.100.10.20">
    <property type="entry name" value="CRISPR-associated endonuclease Cas1, N-terminal domain"/>
    <property type="match status" value="1"/>
</dbReference>
<dbReference type="HAMAP" id="MF_01470">
    <property type="entry name" value="Cas1"/>
    <property type="match status" value="1"/>
</dbReference>
<dbReference type="InterPro" id="IPR050646">
    <property type="entry name" value="Cas1"/>
</dbReference>
<dbReference type="InterPro" id="IPR033641">
    <property type="entry name" value="Cas1_I-E"/>
</dbReference>
<dbReference type="InterPro" id="IPR002729">
    <property type="entry name" value="CRISPR-assoc_Cas1"/>
</dbReference>
<dbReference type="InterPro" id="IPR042206">
    <property type="entry name" value="CRISPR-assoc_Cas1_C"/>
</dbReference>
<dbReference type="InterPro" id="IPR019851">
    <property type="entry name" value="CRISPR-assoc_Cas1_ECOLI"/>
</dbReference>
<dbReference type="InterPro" id="IPR042211">
    <property type="entry name" value="CRISPR-assoc_Cas1_N"/>
</dbReference>
<dbReference type="NCBIfam" id="TIGR00287">
    <property type="entry name" value="cas1"/>
    <property type="match status" value="2"/>
</dbReference>
<dbReference type="NCBIfam" id="TIGR03638">
    <property type="entry name" value="cas1_ECOLI"/>
    <property type="match status" value="1"/>
</dbReference>
<dbReference type="PANTHER" id="PTHR34353:SF3">
    <property type="entry name" value="CRISPR-ASSOCIATED ENDONUCLEASE CAS1"/>
    <property type="match status" value="1"/>
</dbReference>
<dbReference type="PANTHER" id="PTHR34353">
    <property type="entry name" value="CRISPR-ASSOCIATED ENDONUCLEASE CAS1 1"/>
    <property type="match status" value="1"/>
</dbReference>
<dbReference type="Pfam" id="PF01867">
    <property type="entry name" value="Cas_Cas1"/>
    <property type="match status" value="1"/>
</dbReference>
<keyword id="KW-0051">Antiviral defense</keyword>
<keyword id="KW-0238">DNA-binding</keyword>
<keyword id="KW-0255">Endonuclease</keyword>
<keyword id="KW-0378">Hydrolase</keyword>
<keyword id="KW-0460">Magnesium</keyword>
<keyword id="KW-0464">Manganese</keyword>
<keyword id="KW-0479">Metal-binding</keyword>
<keyword id="KW-0540">Nuclease</keyword>
<keyword id="KW-1185">Reference proteome</keyword>
<feature type="chain" id="PRO_0000417074" description="CRISPR-associated endonuclease Cas1 2">
    <location>
        <begin position="1"/>
        <end position="296"/>
    </location>
</feature>
<feature type="binding site" evidence="1">
    <location>
        <position position="157"/>
    </location>
    <ligand>
        <name>Mn(2+)</name>
        <dbReference type="ChEBI" id="CHEBI:29035"/>
    </ligand>
</feature>
<feature type="binding site" evidence="1">
    <location>
        <position position="224"/>
    </location>
    <ligand>
        <name>Mn(2+)</name>
        <dbReference type="ChEBI" id="CHEBI:29035"/>
    </ligand>
</feature>
<feature type="binding site" evidence="1">
    <location>
        <position position="237"/>
    </location>
    <ligand>
        <name>Mn(2+)</name>
        <dbReference type="ChEBI" id="CHEBI:29035"/>
    </ligand>
</feature>
<evidence type="ECO:0000255" key="1">
    <source>
        <dbReference type="HAMAP-Rule" id="MF_01470"/>
    </source>
</evidence>
<reference key="1">
    <citation type="journal article" date="2002" name="Proc. Natl. Acad. Sci. U.S.A.">
        <title>The complete genome sequence of Chlorobium tepidum TLS, a photosynthetic, anaerobic, green-sulfur bacterium.</title>
        <authorList>
            <person name="Eisen J.A."/>
            <person name="Nelson K.E."/>
            <person name="Paulsen I.T."/>
            <person name="Heidelberg J.F."/>
            <person name="Wu M."/>
            <person name="Dodson R.J."/>
            <person name="DeBoy R.T."/>
            <person name="Gwinn M.L."/>
            <person name="Nelson W.C."/>
            <person name="Haft D.H."/>
            <person name="Hickey E.K."/>
            <person name="Peterson J.D."/>
            <person name="Durkin A.S."/>
            <person name="Kolonay J.F."/>
            <person name="Yang F."/>
            <person name="Holt I.E."/>
            <person name="Umayam L.A."/>
            <person name="Mason T.M."/>
            <person name="Brenner M."/>
            <person name="Shea T.P."/>
            <person name="Parksey D.S."/>
            <person name="Nierman W.C."/>
            <person name="Feldblyum T.V."/>
            <person name="Hansen C.L."/>
            <person name="Craven M.B."/>
            <person name="Radune D."/>
            <person name="Vamathevan J.J."/>
            <person name="Khouri H.M."/>
            <person name="White O."/>
            <person name="Gruber T.M."/>
            <person name="Ketchum K.A."/>
            <person name="Venter J.C."/>
            <person name="Tettelin H."/>
            <person name="Bryant D.A."/>
            <person name="Fraser C.M."/>
        </authorList>
    </citation>
    <scope>NUCLEOTIDE SEQUENCE [LARGE SCALE GENOMIC DNA]</scope>
    <source>
        <strain>ATCC 49652 / DSM 12025 / NBRC 103806 / TLS</strain>
    </source>
</reference>